<protein>
    <recommendedName>
        <fullName evidence="1">Multifunctional CCA protein</fullName>
    </recommendedName>
    <domain>
        <recommendedName>
            <fullName evidence="1">CCA-adding enzyme</fullName>
            <ecNumber evidence="1">2.7.7.72</ecNumber>
        </recommendedName>
        <alternativeName>
            <fullName evidence="1">CCA tRNA nucleotidyltransferase</fullName>
        </alternativeName>
        <alternativeName>
            <fullName evidence="1">tRNA CCA-pyrophosphorylase</fullName>
        </alternativeName>
        <alternativeName>
            <fullName evidence="1">tRNA adenylyl-/cytidylyl-transferase</fullName>
        </alternativeName>
        <alternativeName>
            <fullName evidence="1">tRNA nucleotidyltransferase</fullName>
        </alternativeName>
        <alternativeName>
            <fullName evidence="1">tRNA-NT</fullName>
        </alternativeName>
    </domain>
    <domain>
        <recommendedName>
            <fullName evidence="1">2'-nucleotidase</fullName>
            <ecNumber evidence="1">3.1.3.-</ecNumber>
        </recommendedName>
    </domain>
    <domain>
        <recommendedName>
            <fullName evidence="1">2',3'-cyclic phosphodiesterase</fullName>
            <ecNumber evidence="1">3.1.4.-</ecNumber>
        </recommendedName>
    </domain>
    <domain>
        <recommendedName>
            <fullName evidence="1">Phosphatase</fullName>
            <ecNumber evidence="1">3.1.3.-</ecNumber>
        </recommendedName>
    </domain>
</protein>
<organism>
    <name type="scientific">Yersinia enterocolitica serotype O:8 / biotype 1B (strain NCTC 13174 / 8081)</name>
    <dbReference type="NCBI Taxonomy" id="393305"/>
    <lineage>
        <taxon>Bacteria</taxon>
        <taxon>Pseudomonadati</taxon>
        <taxon>Pseudomonadota</taxon>
        <taxon>Gammaproteobacteria</taxon>
        <taxon>Enterobacterales</taxon>
        <taxon>Yersiniaceae</taxon>
        <taxon>Yersinia</taxon>
    </lineage>
</organism>
<sequence>MKTYLVGGAVRDSLLNLPVTEQDWVVVGATPEQLLAQGYQQVGKDFPVFLHPVTHEEYALARTERKSGQGYTGFTCYAAPDVTLEEDLLRRDLTINAIARSSEGELFDPYNGQQDIEKRVLRHVSDAFGEDPLRVLRVARFAARFAHLGFTVASETQSLMAAMAKSGELSALTPERVWKETEKALKTQSPQIYFQVLRDCGALAVLFPEIECLFGVPAPEKWHPEIDTGIHTLMTLAMTAQLSPEVDVRFAALCHDLGKGLTPKEFWPHHHGHGPAGVKLVEQLCQRLRVPNPVRDLAKLVAEYHDLIHTVNKLRPETLLKLFDAIDVWRKPERLEQMIMTSEADARGRTGFEENPYPQGDYLRAAFRIANGVSVQEVVASGLQGLAIRDELKRRRQQALAEWKLTQEVISPLN</sequence>
<dbReference type="EC" id="2.7.7.72" evidence="1"/>
<dbReference type="EC" id="3.1.3.-" evidence="1"/>
<dbReference type="EC" id="3.1.4.-" evidence="1"/>
<dbReference type="EMBL" id="AM286415">
    <property type="protein sequence ID" value="CAL13704.1"/>
    <property type="molecule type" value="Genomic_DNA"/>
</dbReference>
<dbReference type="RefSeq" id="WP_011817222.1">
    <property type="nucleotide sequence ID" value="NC_008800.1"/>
</dbReference>
<dbReference type="RefSeq" id="YP_001007832.1">
    <property type="nucleotide sequence ID" value="NC_008800.1"/>
</dbReference>
<dbReference type="SMR" id="A1JQW2"/>
<dbReference type="KEGG" id="yen:YE3677"/>
<dbReference type="PATRIC" id="fig|393305.7.peg.3914"/>
<dbReference type="eggNOG" id="COG0617">
    <property type="taxonomic scope" value="Bacteria"/>
</dbReference>
<dbReference type="HOGENOM" id="CLU_015961_1_1_6"/>
<dbReference type="OrthoDB" id="9805698at2"/>
<dbReference type="Proteomes" id="UP000000642">
    <property type="component" value="Chromosome"/>
</dbReference>
<dbReference type="GO" id="GO:0005524">
    <property type="term" value="F:ATP binding"/>
    <property type="evidence" value="ECO:0007669"/>
    <property type="project" value="UniProtKB-UniRule"/>
</dbReference>
<dbReference type="GO" id="GO:0004810">
    <property type="term" value="F:CCA tRNA nucleotidyltransferase activity"/>
    <property type="evidence" value="ECO:0007669"/>
    <property type="project" value="UniProtKB-UniRule"/>
</dbReference>
<dbReference type="GO" id="GO:0004112">
    <property type="term" value="F:cyclic-nucleotide phosphodiesterase activity"/>
    <property type="evidence" value="ECO:0007669"/>
    <property type="project" value="UniProtKB-UniRule"/>
</dbReference>
<dbReference type="GO" id="GO:0000287">
    <property type="term" value="F:magnesium ion binding"/>
    <property type="evidence" value="ECO:0007669"/>
    <property type="project" value="UniProtKB-UniRule"/>
</dbReference>
<dbReference type="GO" id="GO:0016791">
    <property type="term" value="F:phosphatase activity"/>
    <property type="evidence" value="ECO:0007669"/>
    <property type="project" value="UniProtKB-UniRule"/>
</dbReference>
<dbReference type="GO" id="GO:0000049">
    <property type="term" value="F:tRNA binding"/>
    <property type="evidence" value="ECO:0007669"/>
    <property type="project" value="UniProtKB-UniRule"/>
</dbReference>
<dbReference type="GO" id="GO:0042245">
    <property type="term" value="P:RNA repair"/>
    <property type="evidence" value="ECO:0007669"/>
    <property type="project" value="UniProtKB-KW"/>
</dbReference>
<dbReference type="GO" id="GO:0001680">
    <property type="term" value="P:tRNA 3'-terminal CCA addition"/>
    <property type="evidence" value="ECO:0007669"/>
    <property type="project" value="UniProtKB-UniRule"/>
</dbReference>
<dbReference type="CDD" id="cd00077">
    <property type="entry name" value="HDc"/>
    <property type="match status" value="1"/>
</dbReference>
<dbReference type="CDD" id="cd05398">
    <property type="entry name" value="NT_ClassII-CCAase"/>
    <property type="match status" value="1"/>
</dbReference>
<dbReference type="FunFam" id="1.10.3090.10:FF:000001">
    <property type="entry name" value="Multifunctional CCA protein"/>
    <property type="match status" value="1"/>
</dbReference>
<dbReference type="FunFam" id="3.30.460.10:FF:000016">
    <property type="entry name" value="Multifunctional CCA protein"/>
    <property type="match status" value="1"/>
</dbReference>
<dbReference type="Gene3D" id="3.30.460.10">
    <property type="entry name" value="Beta Polymerase, domain 2"/>
    <property type="match status" value="1"/>
</dbReference>
<dbReference type="Gene3D" id="1.10.3090.10">
    <property type="entry name" value="cca-adding enzyme, domain 2"/>
    <property type="match status" value="1"/>
</dbReference>
<dbReference type="HAMAP" id="MF_01261">
    <property type="entry name" value="CCA_bact_type1"/>
    <property type="match status" value="1"/>
</dbReference>
<dbReference type="HAMAP" id="MF_01262">
    <property type="entry name" value="CCA_bact_type2"/>
    <property type="match status" value="1"/>
</dbReference>
<dbReference type="InterPro" id="IPR012006">
    <property type="entry name" value="CCA_bact"/>
</dbReference>
<dbReference type="InterPro" id="IPR003607">
    <property type="entry name" value="HD/PDEase_dom"/>
</dbReference>
<dbReference type="InterPro" id="IPR006674">
    <property type="entry name" value="HD_domain"/>
</dbReference>
<dbReference type="InterPro" id="IPR043519">
    <property type="entry name" value="NT_sf"/>
</dbReference>
<dbReference type="InterPro" id="IPR002646">
    <property type="entry name" value="PolA_pol_head_dom"/>
</dbReference>
<dbReference type="InterPro" id="IPR032828">
    <property type="entry name" value="PolyA_RNA-bd"/>
</dbReference>
<dbReference type="InterPro" id="IPR050124">
    <property type="entry name" value="tRNA_CCA-adding_enzyme"/>
</dbReference>
<dbReference type="NCBIfam" id="NF008137">
    <property type="entry name" value="PRK10885.1"/>
    <property type="match status" value="1"/>
</dbReference>
<dbReference type="PANTHER" id="PTHR47545">
    <property type="entry name" value="MULTIFUNCTIONAL CCA PROTEIN"/>
    <property type="match status" value="1"/>
</dbReference>
<dbReference type="PANTHER" id="PTHR47545:SF1">
    <property type="entry name" value="MULTIFUNCTIONAL CCA PROTEIN"/>
    <property type="match status" value="1"/>
</dbReference>
<dbReference type="Pfam" id="PF01966">
    <property type="entry name" value="HD"/>
    <property type="match status" value="1"/>
</dbReference>
<dbReference type="Pfam" id="PF01743">
    <property type="entry name" value="PolyA_pol"/>
    <property type="match status" value="1"/>
</dbReference>
<dbReference type="Pfam" id="PF12627">
    <property type="entry name" value="PolyA_pol_RNAbd"/>
    <property type="match status" value="1"/>
</dbReference>
<dbReference type="PIRSF" id="PIRSF000813">
    <property type="entry name" value="CCA_bact"/>
    <property type="match status" value="1"/>
</dbReference>
<dbReference type="SMART" id="SM00471">
    <property type="entry name" value="HDc"/>
    <property type="match status" value="1"/>
</dbReference>
<dbReference type="SUPFAM" id="SSF81301">
    <property type="entry name" value="Nucleotidyltransferase"/>
    <property type="match status" value="1"/>
</dbReference>
<dbReference type="SUPFAM" id="SSF81891">
    <property type="entry name" value="Poly A polymerase C-terminal region-like"/>
    <property type="match status" value="1"/>
</dbReference>
<dbReference type="PROSITE" id="PS51831">
    <property type="entry name" value="HD"/>
    <property type="match status" value="1"/>
</dbReference>
<name>CCA_YERE8</name>
<comment type="function">
    <text evidence="1">Catalyzes the addition and repair of the essential 3'-terminal CCA sequence in tRNAs without using a nucleic acid template. Adds these three nucleotides in the order of C, C, and A to the tRNA nucleotide-73, using CTP and ATP as substrates and producing inorganic pyrophosphate. tRNA 3'-terminal CCA addition is required both for tRNA processing and repair. Also involved in tRNA surveillance by mediating tandem CCA addition to generate a CCACCA at the 3' terminus of unstable tRNAs. While stable tRNAs receive only 3'-terminal CCA, unstable tRNAs are marked with CCACCA and rapidly degraded.</text>
</comment>
<comment type="catalytic activity">
    <reaction evidence="1">
        <text>a tRNA precursor + 2 CTP + ATP = a tRNA with a 3' CCA end + 3 diphosphate</text>
        <dbReference type="Rhea" id="RHEA:14433"/>
        <dbReference type="Rhea" id="RHEA-COMP:10465"/>
        <dbReference type="Rhea" id="RHEA-COMP:10468"/>
        <dbReference type="ChEBI" id="CHEBI:30616"/>
        <dbReference type="ChEBI" id="CHEBI:33019"/>
        <dbReference type="ChEBI" id="CHEBI:37563"/>
        <dbReference type="ChEBI" id="CHEBI:74896"/>
        <dbReference type="ChEBI" id="CHEBI:83071"/>
        <dbReference type="EC" id="2.7.7.72"/>
    </reaction>
</comment>
<comment type="catalytic activity">
    <reaction evidence="1">
        <text>a tRNA with a 3' CCA end + 2 CTP + ATP = a tRNA with a 3' CCACCA end + 3 diphosphate</text>
        <dbReference type="Rhea" id="RHEA:76235"/>
        <dbReference type="Rhea" id="RHEA-COMP:10468"/>
        <dbReference type="Rhea" id="RHEA-COMP:18655"/>
        <dbReference type="ChEBI" id="CHEBI:30616"/>
        <dbReference type="ChEBI" id="CHEBI:33019"/>
        <dbReference type="ChEBI" id="CHEBI:37563"/>
        <dbReference type="ChEBI" id="CHEBI:83071"/>
        <dbReference type="ChEBI" id="CHEBI:195187"/>
    </reaction>
    <physiologicalReaction direction="left-to-right" evidence="1">
        <dbReference type="Rhea" id="RHEA:76236"/>
    </physiologicalReaction>
</comment>
<comment type="cofactor">
    <cofactor evidence="1">
        <name>Mg(2+)</name>
        <dbReference type="ChEBI" id="CHEBI:18420"/>
    </cofactor>
    <text evidence="1">Magnesium is required for nucleotidyltransferase activity.</text>
</comment>
<comment type="cofactor">
    <cofactor evidence="1">
        <name>Ni(2+)</name>
        <dbReference type="ChEBI" id="CHEBI:49786"/>
    </cofactor>
    <text evidence="1">Nickel for phosphatase activity.</text>
</comment>
<comment type="subunit">
    <text evidence="1">Monomer. Can also form homodimers and oligomers.</text>
</comment>
<comment type="domain">
    <text evidence="1">Comprises two domains: an N-terminal domain containing the nucleotidyltransferase activity and a C-terminal HD domain associated with both phosphodiesterase and phosphatase activities.</text>
</comment>
<comment type="miscellaneous">
    <text evidence="1">A single active site specifically recognizes both ATP and CTP and is responsible for their addition.</text>
</comment>
<comment type="similarity">
    <text evidence="1">Belongs to the tRNA nucleotidyltransferase/poly(A) polymerase family. Bacterial CCA-adding enzyme type 1 subfamily.</text>
</comment>
<reference key="1">
    <citation type="journal article" date="2006" name="PLoS Genet.">
        <title>The complete genome sequence and comparative genome analysis of the high pathogenicity Yersinia enterocolitica strain 8081.</title>
        <authorList>
            <person name="Thomson N.R."/>
            <person name="Howard S."/>
            <person name="Wren B.W."/>
            <person name="Holden M.T.G."/>
            <person name="Crossman L."/>
            <person name="Challis G.L."/>
            <person name="Churcher C."/>
            <person name="Mungall K."/>
            <person name="Brooks K."/>
            <person name="Chillingworth T."/>
            <person name="Feltwell T."/>
            <person name="Abdellah Z."/>
            <person name="Hauser H."/>
            <person name="Jagels K."/>
            <person name="Maddison M."/>
            <person name="Moule S."/>
            <person name="Sanders M."/>
            <person name="Whitehead S."/>
            <person name="Quail M.A."/>
            <person name="Dougan G."/>
            <person name="Parkhill J."/>
            <person name="Prentice M.B."/>
        </authorList>
    </citation>
    <scope>NUCLEOTIDE SEQUENCE [LARGE SCALE GENOMIC DNA]</scope>
    <source>
        <strain>NCTC 13174 / 8081</strain>
    </source>
</reference>
<feature type="chain" id="PRO_1000054310" description="Multifunctional CCA protein">
    <location>
        <begin position="1"/>
        <end position="414"/>
    </location>
</feature>
<feature type="domain" description="HD" evidence="1">
    <location>
        <begin position="228"/>
        <end position="329"/>
    </location>
</feature>
<feature type="binding site" evidence="1">
    <location>
        <position position="8"/>
    </location>
    <ligand>
        <name>ATP</name>
        <dbReference type="ChEBI" id="CHEBI:30616"/>
    </ligand>
</feature>
<feature type="binding site" evidence="1">
    <location>
        <position position="8"/>
    </location>
    <ligand>
        <name>CTP</name>
        <dbReference type="ChEBI" id="CHEBI:37563"/>
    </ligand>
</feature>
<feature type="binding site" evidence="1">
    <location>
        <position position="11"/>
    </location>
    <ligand>
        <name>ATP</name>
        <dbReference type="ChEBI" id="CHEBI:30616"/>
    </ligand>
</feature>
<feature type="binding site" evidence="1">
    <location>
        <position position="11"/>
    </location>
    <ligand>
        <name>CTP</name>
        <dbReference type="ChEBI" id="CHEBI:37563"/>
    </ligand>
</feature>
<feature type="binding site" evidence="1">
    <location>
        <position position="21"/>
    </location>
    <ligand>
        <name>Mg(2+)</name>
        <dbReference type="ChEBI" id="CHEBI:18420"/>
    </ligand>
</feature>
<feature type="binding site" evidence="1">
    <location>
        <position position="23"/>
    </location>
    <ligand>
        <name>Mg(2+)</name>
        <dbReference type="ChEBI" id="CHEBI:18420"/>
    </ligand>
</feature>
<feature type="binding site" evidence="1">
    <location>
        <position position="91"/>
    </location>
    <ligand>
        <name>ATP</name>
        <dbReference type="ChEBI" id="CHEBI:30616"/>
    </ligand>
</feature>
<feature type="binding site" evidence="1">
    <location>
        <position position="91"/>
    </location>
    <ligand>
        <name>CTP</name>
        <dbReference type="ChEBI" id="CHEBI:37563"/>
    </ligand>
</feature>
<feature type="binding site" evidence="1">
    <location>
        <position position="137"/>
    </location>
    <ligand>
        <name>ATP</name>
        <dbReference type="ChEBI" id="CHEBI:30616"/>
    </ligand>
</feature>
<feature type="binding site" evidence="1">
    <location>
        <position position="137"/>
    </location>
    <ligand>
        <name>CTP</name>
        <dbReference type="ChEBI" id="CHEBI:37563"/>
    </ligand>
</feature>
<feature type="binding site" evidence="1">
    <location>
        <position position="140"/>
    </location>
    <ligand>
        <name>ATP</name>
        <dbReference type="ChEBI" id="CHEBI:30616"/>
    </ligand>
</feature>
<feature type="binding site" evidence="1">
    <location>
        <position position="140"/>
    </location>
    <ligand>
        <name>CTP</name>
        <dbReference type="ChEBI" id="CHEBI:37563"/>
    </ligand>
</feature>
<evidence type="ECO:0000255" key="1">
    <source>
        <dbReference type="HAMAP-Rule" id="MF_01261"/>
    </source>
</evidence>
<proteinExistence type="inferred from homology"/>
<gene>
    <name evidence="1" type="primary">cca</name>
    <name type="ordered locus">YE3677</name>
</gene>
<keyword id="KW-0067">ATP-binding</keyword>
<keyword id="KW-0378">Hydrolase</keyword>
<keyword id="KW-0460">Magnesium</keyword>
<keyword id="KW-0479">Metal-binding</keyword>
<keyword id="KW-0511">Multifunctional enzyme</keyword>
<keyword id="KW-0533">Nickel</keyword>
<keyword id="KW-0547">Nucleotide-binding</keyword>
<keyword id="KW-0548">Nucleotidyltransferase</keyword>
<keyword id="KW-0692">RNA repair</keyword>
<keyword id="KW-0694">RNA-binding</keyword>
<keyword id="KW-0808">Transferase</keyword>
<keyword id="KW-0819">tRNA processing</keyword>
<accession>A1JQW2</accession>